<evidence type="ECO:0000255" key="1">
    <source>
        <dbReference type="HAMAP-Rule" id="MF_03159"/>
    </source>
</evidence>
<proteinExistence type="inferred from homology"/>
<reference key="1">
    <citation type="journal article" date="2008" name="Nature">
        <title>The genome of the simian and human malaria parasite Plasmodium knowlesi.</title>
        <authorList>
            <person name="Pain A."/>
            <person name="Boehme U."/>
            <person name="Berry A.E."/>
            <person name="Mungall K."/>
            <person name="Finn R.D."/>
            <person name="Jackson A.P."/>
            <person name="Mourier T."/>
            <person name="Mistry J."/>
            <person name="Pasini E.M."/>
            <person name="Aslett M.A."/>
            <person name="Balasubrammaniam S."/>
            <person name="Borgwardt K."/>
            <person name="Brooks K."/>
            <person name="Carret C."/>
            <person name="Carver T.J."/>
            <person name="Cherevach I."/>
            <person name="Chillingworth T."/>
            <person name="Clark T.G."/>
            <person name="Galinski M.R."/>
            <person name="Hall N."/>
            <person name="Harper D."/>
            <person name="Harris D."/>
            <person name="Hauser H."/>
            <person name="Ivens A."/>
            <person name="Janssen C.S."/>
            <person name="Keane T."/>
            <person name="Larke N."/>
            <person name="Lapp S."/>
            <person name="Marti M."/>
            <person name="Moule S."/>
            <person name="Meyer I.M."/>
            <person name="Ormond D."/>
            <person name="Peters N."/>
            <person name="Sanders M."/>
            <person name="Sanders S."/>
            <person name="Sargeant T.J."/>
            <person name="Simmonds M."/>
            <person name="Smith F."/>
            <person name="Squares R."/>
            <person name="Thurston S."/>
            <person name="Tivey A.R."/>
            <person name="Walker D."/>
            <person name="White B."/>
            <person name="Zuiderwijk E."/>
            <person name="Churcher C."/>
            <person name="Quail M.A."/>
            <person name="Cowman A.F."/>
            <person name="Turner C.M.R."/>
            <person name="Rajandream M.A."/>
            <person name="Kocken C.H.M."/>
            <person name="Thomas A.W."/>
            <person name="Newbold C.I."/>
            <person name="Barrell B.G."/>
            <person name="Berriman M."/>
        </authorList>
    </citation>
    <scope>NUCLEOTIDE SEQUENCE [LARGE SCALE GENOMIC DNA]</scope>
    <source>
        <strain>H</strain>
    </source>
</reference>
<gene>
    <name type="ORF">PKH_124640</name>
</gene>
<keyword id="KW-0413">Isomerase</keyword>
<keyword id="KW-0479">Metal-binding</keyword>
<keyword id="KW-0520">NAD</keyword>
<keyword id="KW-0521">NADP</keyword>
<keyword id="KW-0547">Nucleotide-binding</keyword>
<keyword id="KW-0630">Potassium</keyword>
<keyword id="KW-1185">Reference proteome</keyword>
<feature type="chain" id="PRO_0000416326" description="NAD(P)H-hydrate epimerase">
    <location>
        <begin position="1"/>
        <end position="289"/>
    </location>
</feature>
<feature type="domain" description="YjeF N-terminal" evidence="1">
    <location>
        <begin position="71"/>
        <end position="277"/>
    </location>
</feature>
<feature type="binding site" evidence="1">
    <location>
        <begin position="122"/>
        <end position="126"/>
    </location>
    <ligand>
        <name>(6S)-NADPHX</name>
        <dbReference type="ChEBI" id="CHEBI:64076"/>
    </ligand>
</feature>
<feature type="binding site" evidence="1">
    <location>
        <position position="123"/>
    </location>
    <ligand>
        <name>K(+)</name>
        <dbReference type="ChEBI" id="CHEBI:29103"/>
    </ligand>
</feature>
<feature type="binding site" evidence="1">
    <location>
        <position position="185"/>
    </location>
    <ligand>
        <name>K(+)</name>
        <dbReference type="ChEBI" id="CHEBI:29103"/>
    </ligand>
</feature>
<feature type="binding site" evidence="1">
    <location>
        <begin position="189"/>
        <end position="195"/>
    </location>
    <ligand>
        <name>(6S)-NADPHX</name>
        <dbReference type="ChEBI" id="CHEBI:64076"/>
    </ligand>
</feature>
<feature type="binding site" evidence="1">
    <location>
        <position position="218"/>
    </location>
    <ligand>
        <name>(6S)-NADPHX</name>
        <dbReference type="ChEBI" id="CHEBI:64076"/>
    </ligand>
</feature>
<feature type="binding site" evidence="1">
    <location>
        <position position="221"/>
    </location>
    <ligand>
        <name>K(+)</name>
        <dbReference type="ChEBI" id="CHEBI:29103"/>
    </ligand>
</feature>
<accession>B3L9G8</accession>
<protein>
    <recommendedName>
        <fullName evidence="1">NAD(P)H-hydrate epimerase</fullName>
        <ecNumber>5.1.99.6</ecNumber>
    </recommendedName>
    <alternativeName>
        <fullName evidence="1">NAD(P)HX epimerase</fullName>
    </alternativeName>
</protein>
<sequence>MKKELMLRCANNFVLQNSVCLLGFLRLVKSHLTGRVGIIKARSFKGKRTNCTSTCVHLNNMEVTYLSQSLAQTIDNELMSDDVGYTTEQLMELAGLSIAQIICREYSFDKFKKILIFCGPGNNGGDGLVAARHLKQFGYDITVAYPKENTKVLFQRLLNLLHHYHVPVVKSATGEDIKMYDLVVDALFGFSFRGEPRSPFDEIIHMINQSNKPVVSVDVPSGINIDGDTAGTALSVNSEMNISLMLPKEGVRHYRKKHYLGGRFIPNSIVEKYNLKIPQFTGDNSYVQL</sequence>
<comment type="function">
    <text evidence="1">Catalyzes the epimerization of the S- and R-forms of NAD(P)HX, a damaged form of NAD(P)H that is a result of enzymatic or heat-dependent hydration. This is a prerequisite for the S-specific NAD(P)H-hydrate dehydratase to allow the repair of both epimers of NAD(P)HX.</text>
</comment>
<comment type="catalytic activity">
    <reaction>
        <text>(6R)-NADHX = (6S)-NADHX</text>
        <dbReference type="Rhea" id="RHEA:32215"/>
        <dbReference type="ChEBI" id="CHEBI:64074"/>
        <dbReference type="ChEBI" id="CHEBI:64075"/>
        <dbReference type="EC" id="5.1.99.6"/>
    </reaction>
</comment>
<comment type="catalytic activity">
    <reaction>
        <text>(6R)-NADPHX = (6S)-NADPHX</text>
        <dbReference type="Rhea" id="RHEA:32227"/>
        <dbReference type="ChEBI" id="CHEBI:64076"/>
        <dbReference type="ChEBI" id="CHEBI:64077"/>
        <dbReference type="EC" id="5.1.99.6"/>
    </reaction>
</comment>
<comment type="cofactor">
    <cofactor evidence="1">
        <name>K(+)</name>
        <dbReference type="ChEBI" id="CHEBI:29103"/>
    </cofactor>
    <text evidence="1">Binds 1 potassium ion per subunit.</text>
</comment>
<comment type="similarity">
    <text evidence="1">Belongs to the NnrE/AIBP family.</text>
</comment>
<dbReference type="EC" id="5.1.99.6"/>
<dbReference type="EMBL" id="AM910994">
    <property type="protein sequence ID" value="CAQ41541.1"/>
    <property type="molecule type" value="Genomic_DNA"/>
</dbReference>
<dbReference type="RefSeq" id="XP_002260274.1">
    <property type="nucleotide sequence ID" value="XM_002260238.1"/>
</dbReference>
<dbReference type="SMR" id="B3L9G8"/>
<dbReference type="FunCoup" id="B3L9G8">
    <property type="interactions" value="19"/>
</dbReference>
<dbReference type="STRING" id="5851.B3L9G8"/>
<dbReference type="EnsemblProtists" id="CAQ41541">
    <property type="protein sequence ID" value="CAQ41541"/>
    <property type="gene ID" value="PKH_124640"/>
</dbReference>
<dbReference type="GeneID" id="7322043"/>
<dbReference type="KEGG" id="pkn:PKNH_1222100"/>
<dbReference type="VEuPathDB" id="PlasmoDB:PKNH_1222100"/>
<dbReference type="HOGENOM" id="CLU_024853_3_0_1"/>
<dbReference type="InParanoid" id="B3L9G8"/>
<dbReference type="OMA" id="RHLFHYG"/>
<dbReference type="OrthoDB" id="10064708at2759"/>
<dbReference type="PhylomeDB" id="B3L9G8"/>
<dbReference type="Proteomes" id="UP000031513">
    <property type="component" value="Chromosome 12"/>
</dbReference>
<dbReference type="GO" id="GO:0005739">
    <property type="term" value="C:mitochondrion"/>
    <property type="evidence" value="ECO:0007669"/>
    <property type="project" value="TreeGrafter"/>
</dbReference>
<dbReference type="GO" id="GO:0046872">
    <property type="term" value="F:metal ion binding"/>
    <property type="evidence" value="ECO:0007669"/>
    <property type="project" value="UniProtKB-KW"/>
</dbReference>
<dbReference type="GO" id="GO:0052856">
    <property type="term" value="F:NAD(P)HX epimerase activity"/>
    <property type="evidence" value="ECO:0007669"/>
    <property type="project" value="UniProtKB-UniRule"/>
</dbReference>
<dbReference type="GO" id="GO:0000166">
    <property type="term" value="F:nucleotide binding"/>
    <property type="evidence" value="ECO:0007669"/>
    <property type="project" value="UniProtKB-KW"/>
</dbReference>
<dbReference type="Gene3D" id="3.40.50.10260">
    <property type="entry name" value="YjeF N-terminal domain"/>
    <property type="match status" value="1"/>
</dbReference>
<dbReference type="HAMAP" id="MF_01966">
    <property type="entry name" value="NADHX_epimerase"/>
    <property type="match status" value="1"/>
</dbReference>
<dbReference type="InterPro" id="IPR004443">
    <property type="entry name" value="YjeF_N_dom"/>
</dbReference>
<dbReference type="InterPro" id="IPR036652">
    <property type="entry name" value="YjeF_N_dom_sf"/>
</dbReference>
<dbReference type="InterPro" id="IPR032976">
    <property type="entry name" value="YJEFN_prot_NAXE-like"/>
</dbReference>
<dbReference type="NCBIfam" id="TIGR00197">
    <property type="entry name" value="yjeF_nterm"/>
    <property type="match status" value="1"/>
</dbReference>
<dbReference type="PANTHER" id="PTHR13232">
    <property type="entry name" value="NAD(P)H-HYDRATE EPIMERASE"/>
    <property type="match status" value="1"/>
</dbReference>
<dbReference type="PANTHER" id="PTHR13232:SF10">
    <property type="entry name" value="NAD(P)H-HYDRATE EPIMERASE"/>
    <property type="match status" value="1"/>
</dbReference>
<dbReference type="Pfam" id="PF03853">
    <property type="entry name" value="YjeF_N"/>
    <property type="match status" value="1"/>
</dbReference>
<dbReference type="SUPFAM" id="SSF64153">
    <property type="entry name" value="YjeF N-terminal domain-like"/>
    <property type="match status" value="1"/>
</dbReference>
<dbReference type="PROSITE" id="PS51385">
    <property type="entry name" value="YJEF_N"/>
    <property type="match status" value="1"/>
</dbReference>
<name>NNRE_PLAKH</name>
<organism>
    <name type="scientific">Plasmodium knowlesi (strain H)</name>
    <dbReference type="NCBI Taxonomy" id="5851"/>
    <lineage>
        <taxon>Eukaryota</taxon>
        <taxon>Sar</taxon>
        <taxon>Alveolata</taxon>
        <taxon>Apicomplexa</taxon>
        <taxon>Aconoidasida</taxon>
        <taxon>Haemosporida</taxon>
        <taxon>Plasmodiidae</taxon>
        <taxon>Plasmodium</taxon>
        <taxon>Plasmodium (Plasmodium)</taxon>
    </lineage>
</organism>